<proteinExistence type="inferred from homology"/>
<feature type="chain" id="PRO_1000048308" description="Cytidylate kinase">
    <location>
        <begin position="1"/>
        <end position="217"/>
    </location>
</feature>
<feature type="binding site" evidence="1">
    <location>
        <begin position="9"/>
        <end position="17"/>
    </location>
    <ligand>
        <name>ATP</name>
        <dbReference type="ChEBI" id="CHEBI:30616"/>
    </ligand>
</feature>
<reference key="1">
    <citation type="submission" date="2007-05" db="EMBL/GenBank/DDBJ databases">
        <title>Complete sequence of Thermosipho melanesiensis BI429.</title>
        <authorList>
            <consortium name="US DOE Joint Genome Institute"/>
            <person name="Copeland A."/>
            <person name="Lucas S."/>
            <person name="Lapidus A."/>
            <person name="Barry K."/>
            <person name="Glavina del Rio T."/>
            <person name="Dalin E."/>
            <person name="Tice H."/>
            <person name="Pitluck S."/>
            <person name="Chertkov O."/>
            <person name="Brettin T."/>
            <person name="Bruce D."/>
            <person name="Detter J.C."/>
            <person name="Han C."/>
            <person name="Schmutz J."/>
            <person name="Larimer F."/>
            <person name="Land M."/>
            <person name="Hauser L."/>
            <person name="Kyrpides N."/>
            <person name="Mikhailova N."/>
            <person name="Nelson K."/>
            <person name="Gogarten J.P."/>
            <person name="Noll K."/>
            <person name="Richardson P."/>
        </authorList>
    </citation>
    <scope>NUCLEOTIDE SEQUENCE [LARGE SCALE GENOMIC DNA]</scope>
    <source>
        <strain>DSM 12029 / CIP 104789 / BI429</strain>
    </source>
</reference>
<sequence length="217" mass="24461">MPCRIAIDGPAGSGKTTVAKLLADALGIFYLDTGAMYRIVGLYLSENNVESDEEIERKLKELKITFSNGNFFLNGRKIGNEIRTPEIGIYASKYAKRLPVRNYLTKIQREIAKNQSIVVEGRDIGTVVLPDAEVKIFLVASQEARAKRRYKELMEKGVEVTFEEVLSEIVLRDKQDSERDVAPLKKAKDAILIDTTNLSIEEVIERILKVVKEKCKL</sequence>
<gene>
    <name evidence="1" type="primary">cmk</name>
    <name type="ordered locus">Tmel_1622</name>
</gene>
<protein>
    <recommendedName>
        <fullName evidence="1">Cytidylate kinase</fullName>
        <shortName evidence="1">CK</shortName>
        <ecNumber evidence="1">2.7.4.25</ecNumber>
    </recommendedName>
    <alternativeName>
        <fullName evidence="1">Cytidine monophosphate kinase</fullName>
        <shortName evidence="1">CMP kinase</shortName>
    </alternativeName>
</protein>
<dbReference type="EC" id="2.7.4.25" evidence="1"/>
<dbReference type="EMBL" id="CP000716">
    <property type="protein sequence ID" value="ABR31466.1"/>
    <property type="molecule type" value="Genomic_DNA"/>
</dbReference>
<dbReference type="RefSeq" id="WP_012057825.1">
    <property type="nucleotide sequence ID" value="NC_009616.1"/>
</dbReference>
<dbReference type="SMR" id="A6LNG5"/>
<dbReference type="STRING" id="391009.Tmel_1622"/>
<dbReference type="KEGG" id="tme:Tmel_1622"/>
<dbReference type="eggNOG" id="COG0283">
    <property type="taxonomic scope" value="Bacteria"/>
</dbReference>
<dbReference type="HOGENOM" id="CLU_079959_0_2_0"/>
<dbReference type="OrthoDB" id="9807434at2"/>
<dbReference type="Proteomes" id="UP000001110">
    <property type="component" value="Chromosome"/>
</dbReference>
<dbReference type="GO" id="GO:0005737">
    <property type="term" value="C:cytoplasm"/>
    <property type="evidence" value="ECO:0007669"/>
    <property type="project" value="UniProtKB-SubCell"/>
</dbReference>
<dbReference type="GO" id="GO:0005524">
    <property type="term" value="F:ATP binding"/>
    <property type="evidence" value="ECO:0007669"/>
    <property type="project" value="UniProtKB-UniRule"/>
</dbReference>
<dbReference type="GO" id="GO:0036430">
    <property type="term" value="F:CMP kinase activity"/>
    <property type="evidence" value="ECO:0007669"/>
    <property type="project" value="RHEA"/>
</dbReference>
<dbReference type="GO" id="GO:0036431">
    <property type="term" value="F:dCMP kinase activity"/>
    <property type="evidence" value="ECO:0007669"/>
    <property type="project" value="RHEA"/>
</dbReference>
<dbReference type="GO" id="GO:0006220">
    <property type="term" value="P:pyrimidine nucleotide metabolic process"/>
    <property type="evidence" value="ECO:0007669"/>
    <property type="project" value="UniProtKB-UniRule"/>
</dbReference>
<dbReference type="CDD" id="cd02020">
    <property type="entry name" value="CMPK"/>
    <property type="match status" value="1"/>
</dbReference>
<dbReference type="Gene3D" id="3.40.50.300">
    <property type="entry name" value="P-loop containing nucleotide triphosphate hydrolases"/>
    <property type="match status" value="1"/>
</dbReference>
<dbReference type="HAMAP" id="MF_00238">
    <property type="entry name" value="Cytidyl_kinase_type1"/>
    <property type="match status" value="1"/>
</dbReference>
<dbReference type="InterPro" id="IPR003136">
    <property type="entry name" value="Cytidylate_kin"/>
</dbReference>
<dbReference type="InterPro" id="IPR011994">
    <property type="entry name" value="Cytidylate_kinase_dom"/>
</dbReference>
<dbReference type="InterPro" id="IPR027417">
    <property type="entry name" value="P-loop_NTPase"/>
</dbReference>
<dbReference type="NCBIfam" id="TIGR00017">
    <property type="entry name" value="cmk"/>
    <property type="match status" value="1"/>
</dbReference>
<dbReference type="Pfam" id="PF02224">
    <property type="entry name" value="Cytidylate_kin"/>
    <property type="match status" value="1"/>
</dbReference>
<dbReference type="SUPFAM" id="SSF52540">
    <property type="entry name" value="P-loop containing nucleoside triphosphate hydrolases"/>
    <property type="match status" value="1"/>
</dbReference>
<organism>
    <name type="scientific">Thermosipho melanesiensis (strain DSM 12029 / CIP 104789 / BI429)</name>
    <dbReference type="NCBI Taxonomy" id="391009"/>
    <lineage>
        <taxon>Bacteria</taxon>
        <taxon>Thermotogati</taxon>
        <taxon>Thermotogota</taxon>
        <taxon>Thermotogae</taxon>
        <taxon>Thermotogales</taxon>
        <taxon>Fervidobacteriaceae</taxon>
        <taxon>Thermosipho</taxon>
    </lineage>
</organism>
<name>KCY_THEM4</name>
<accession>A6LNG5</accession>
<comment type="catalytic activity">
    <reaction evidence="1">
        <text>CMP + ATP = CDP + ADP</text>
        <dbReference type="Rhea" id="RHEA:11600"/>
        <dbReference type="ChEBI" id="CHEBI:30616"/>
        <dbReference type="ChEBI" id="CHEBI:58069"/>
        <dbReference type="ChEBI" id="CHEBI:60377"/>
        <dbReference type="ChEBI" id="CHEBI:456216"/>
        <dbReference type="EC" id="2.7.4.25"/>
    </reaction>
</comment>
<comment type="catalytic activity">
    <reaction evidence="1">
        <text>dCMP + ATP = dCDP + ADP</text>
        <dbReference type="Rhea" id="RHEA:25094"/>
        <dbReference type="ChEBI" id="CHEBI:30616"/>
        <dbReference type="ChEBI" id="CHEBI:57566"/>
        <dbReference type="ChEBI" id="CHEBI:58593"/>
        <dbReference type="ChEBI" id="CHEBI:456216"/>
        <dbReference type="EC" id="2.7.4.25"/>
    </reaction>
</comment>
<comment type="subcellular location">
    <subcellularLocation>
        <location evidence="1">Cytoplasm</location>
    </subcellularLocation>
</comment>
<comment type="similarity">
    <text evidence="1">Belongs to the cytidylate kinase family. Type 1 subfamily.</text>
</comment>
<keyword id="KW-0067">ATP-binding</keyword>
<keyword id="KW-0963">Cytoplasm</keyword>
<keyword id="KW-0418">Kinase</keyword>
<keyword id="KW-0547">Nucleotide-binding</keyword>
<keyword id="KW-0808">Transferase</keyword>
<evidence type="ECO:0000255" key="1">
    <source>
        <dbReference type="HAMAP-Rule" id="MF_00238"/>
    </source>
</evidence>